<accession>Q82I51</accession>
<comment type="function">
    <text evidence="1">Has an important function as a repair enzyme for proteins that have been inactivated by oxidation. Catalyzes the reversible oxidation-reduction of methionine sulfoxide in proteins to methionine.</text>
</comment>
<comment type="catalytic activity">
    <reaction evidence="1">
        <text>L-methionyl-[protein] + [thioredoxin]-disulfide + H2O = L-methionyl-(S)-S-oxide-[protein] + [thioredoxin]-dithiol</text>
        <dbReference type="Rhea" id="RHEA:14217"/>
        <dbReference type="Rhea" id="RHEA-COMP:10698"/>
        <dbReference type="Rhea" id="RHEA-COMP:10700"/>
        <dbReference type="Rhea" id="RHEA-COMP:12313"/>
        <dbReference type="Rhea" id="RHEA-COMP:12315"/>
        <dbReference type="ChEBI" id="CHEBI:15377"/>
        <dbReference type="ChEBI" id="CHEBI:16044"/>
        <dbReference type="ChEBI" id="CHEBI:29950"/>
        <dbReference type="ChEBI" id="CHEBI:44120"/>
        <dbReference type="ChEBI" id="CHEBI:50058"/>
        <dbReference type="EC" id="1.8.4.11"/>
    </reaction>
</comment>
<comment type="catalytic activity">
    <reaction evidence="1">
        <text>[thioredoxin]-disulfide + L-methionine + H2O = L-methionine (S)-S-oxide + [thioredoxin]-dithiol</text>
        <dbReference type="Rhea" id="RHEA:19993"/>
        <dbReference type="Rhea" id="RHEA-COMP:10698"/>
        <dbReference type="Rhea" id="RHEA-COMP:10700"/>
        <dbReference type="ChEBI" id="CHEBI:15377"/>
        <dbReference type="ChEBI" id="CHEBI:29950"/>
        <dbReference type="ChEBI" id="CHEBI:50058"/>
        <dbReference type="ChEBI" id="CHEBI:57844"/>
        <dbReference type="ChEBI" id="CHEBI:58772"/>
        <dbReference type="EC" id="1.8.4.11"/>
    </reaction>
</comment>
<comment type="similarity">
    <text evidence="1">Belongs to the MsrA Met sulfoxide reductase family.</text>
</comment>
<dbReference type="EC" id="1.8.4.11" evidence="1"/>
<dbReference type="EMBL" id="BA000030">
    <property type="protein sequence ID" value="BAC71018.1"/>
    <property type="molecule type" value="Genomic_DNA"/>
</dbReference>
<dbReference type="RefSeq" id="WP_010984737.1">
    <property type="nucleotide sequence ID" value="NZ_JZJK01000090.1"/>
</dbReference>
<dbReference type="SMR" id="Q82I51"/>
<dbReference type="GeneID" id="41540381"/>
<dbReference type="KEGG" id="sma:SAVERM_3307"/>
<dbReference type="eggNOG" id="COG0225">
    <property type="taxonomic scope" value="Bacteria"/>
</dbReference>
<dbReference type="HOGENOM" id="CLU_031040_10_2_11"/>
<dbReference type="OrthoDB" id="4174719at2"/>
<dbReference type="Proteomes" id="UP000000428">
    <property type="component" value="Chromosome"/>
</dbReference>
<dbReference type="GO" id="GO:0033744">
    <property type="term" value="F:L-methionine:thioredoxin-disulfide S-oxidoreductase activity"/>
    <property type="evidence" value="ECO:0007669"/>
    <property type="project" value="RHEA"/>
</dbReference>
<dbReference type="GO" id="GO:0008113">
    <property type="term" value="F:peptide-methionine (S)-S-oxide reductase activity"/>
    <property type="evidence" value="ECO:0007669"/>
    <property type="project" value="UniProtKB-UniRule"/>
</dbReference>
<dbReference type="GO" id="GO:0036211">
    <property type="term" value="P:protein modification process"/>
    <property type="evidence" value="ECO:0007669"/>
    <property type="project" value="UniProtKB-UniRule"/>
</dbReference>
<dbReference type="FunFam" id="3.30.1060.10:FF:000005">
    <property type="entry name" value="Peptide methionine sulfoxide reductase MsrA"/>
    <property type="match status" value="1"/>
</dbReference>
<dbReference type="Gene3D" id="3.30.1060.10">
    <property type="entry name" value="Peptide methionine sulphoxide reductase MsrA"/>
    <property type="match status" value="1"/>
</dbReference>
<dbReference type="HAMAP" id="MF_01401">
    <property type="entry name" value="MsrA"/>
    <property type="match status" value="1"/>
</dbReference>
<dbReference type="InterPro" id="IPR002569">
    <property type="entry name" value="Met_Sox_Rdtase_MsrA_dom"/>
</dbReference>
<dbReference type="InterPro" id="IPR036509">
    <property type="entry name" value="Met_Sox_Rdtase_MsrA_sf"/>
</dbReference>
<dbReference type="NCBIfam" id="TIGR00401">
    <property type="entry name" value="msrA"/>
    <property type="match status" value="1"/>
</dbReference>
<dbReference type="PANTHER" id="PTHR43774">
    <property type="entry name" value="PEPTIDE METHIONINE SULFOXIDE REDUCTASE"/>
    <property type="match status" value="1"/>
</dbReference>
<dbReference type="PANTHER" id="PTHR43774:SF1">
    <property type="entry name" value="PEPTIDE METHIONINE SULFOXIDE REDUCTASE MSRA 2"/>
    <property type="match status" value="1"/>
</dbReference>
<dbReference type="Pfam" id="PF01625">
    <property type="entry name" value="PMSR"/>
    <property type="match status" value="1"/>
</dbReference>
<dbReference type="SUPFAM" id="SSF55068">
    <property type="entry name" value="Peptide methionine sulfoxide reductase"/>
    <property type="match status" value="1"/>
</dbReference>
<name>MSRA_STRAW</name>
<keyword id="KW-0560">Oxidoreductase</keyword>
<keyword id="KW-1185">Reference proteome</keyword>
<organism>
    <name type="scientific">Streptomyces avermitilis (strain ATCC 31267 / DSM 46492 / JCM 5070 / NBRC 14893 / NCIMB 12804 / NRRL 8165 / MA-4680)</name>
    <dbReference type="NCBI Taxonomy" id="227882"/>
    <lineage>
        <taxon>Bacteria</taxon>
        <taxon>Bacillati</taxon>
        <taxon>Actinomycetota</taxon>
        <taxon>Actinomycetes</taxon>
        <taxon>Kitasatosporales</taxon>
        <taxon>Streptomycetaceae</taxon>
        <taxon>Streptomyces</taxon>
    </lineage>
</organism>
<sequence>MAAQTQRAVLAGGCFWGMEDLIRRLPGVTATRVGYTGGDVPNATYRNHGTHAEAIEILFDPARTDFRAILEFFFQIHDPSTKNRQGNDIGLSYRSAIYYVDDEQKRIAEDTIADVDASGLWPGKVVTEVEPVGPFWEAEPEHQDYLERYPDGYTCHFPRPGWRLPARAEG</sequence>
<feature type="chain" id="PRO_1000068364" description="Peptide methionine sulfoxide reductase MsrA">
    <location>
        <begin position="1"/>
        <end position="170"/>
    </location>
</feature>
<feature type="active site" evidence="1">
    <location>
        <position position="14"/>
    </location>
</feature>
<gene>
    <name evidence="1" type="primary">msrA</name>
    <name type="synonym">sav3307</name>
    <name type="ordered locus">SAV_3307</name>
</gene>
<protein>
    <recommendedName>
        <fullName evidence="1">Peptide methionine sulfoxide reductase MsrA</fullName>
        <shortName evidence="1">Protein-methionine-S-oxide reductase</shortName>
        <ecNumber evidence="1">1.8.4.11</ecNumber>
    </recommendedName>
    <alternativeName>
        <fullName evidence="1">Peptide-methionine (S)-S-oxide reductase</fullName>
        <shortName evidence="1">Peptide Met(O) reductase</shortName>
    </alternativeName>
</protein>
<evidence type="ECO:0000255" key="1">
    <source>
        <dbReference type="HAMAP-Rule" id="MF_01401"/>
    </source>
</evidence>
<proteinExistence type="inferred from homology"/>
<reference key="1">
    <citation type="journal article" date="2003" name="Nat. Biotechnol.">
        <title>Complete genome sequence and comparative analysis of the industrial microorganism Streptomyces avermitilis.</title>
        <authorList>
            <person name="Ikeda H."/>
            <person name="Ishikawa J."/>
            <person name="Hanamoto A."/>
            <person name="Shinose M."/>
            <person name="Kikuchi H."/>
            <person name="Shiba T."/>
            <person name="Sakaki Y."/>
            <person name="Hattori M."/>
            <person name="Omura S."/>
        </authorList>
    </citation>
    <scope>NUCLEOTIDE SEQUENCE [LARGE SCALE GENOMIC DNA]</scope>
    <source>
        <strain>ATCC 31267 / DSM 46492 / JCM 5070 / NBRC 14893 / NCIMB 12804 / NRRL 8165 / MA-4680</strain>
    </source>
</reference>
<reference key="2">
    <citation type="journal article" date="2001" name="Proc. Natl. Acad. Sci. U.S.A.">
        <title>Genome sequence of an industrial microorganism Streptomyces avermitilis: deducing the ability of producing secondary metabolites.</title>
        <authorList>
            <person name="Omura S."/>
            <person name="Ikeda H."/>
            <person name="Ishikawa J."/>
            <person name="Hanamoto A."/>
            <person name="Takahashi C."/>
            <person name="Shinose M."/>
            <person name="Takahashi Y."/>
            <person name="Horikawa H."/>
            <person name="Nakazawa H."/>
            <person name="Osonoe T."/>
            <person name="Kikuchi H."/>
            <person name="Shiba T."/>
            <person name="Sakaki Y."/>
            <person name="Hattori M."/>
        </authorList>
    </citation>
    <scope>NUCLEOTIDE SEQUENCE [LARGE SCALE GENOMIC DNA]</scope>
    <source>
        <strain>ATCC 31267 / DSM 46492 / JCM 5070 / NBRC 14893 / NCIMB 12804 / NRRL 8165 / MA-4680</strain>
    </source>
</reference>